<protein>
    <recommendedName>
        <fullName evidence="2">Transaldolase</fullName>
        <ecNumber evidence="2">2.2.1.2</ecNumber>
    </recommendedName>
</protein>
<name>TAL_VIBVU</name>
<gene>
    <name evidence="2" type="primary">tal</name>
    <name type="ordered locus">VV2_0552</name>
</gene>
<reference key="1">
    <citation type="submission" date="2002-12" db="EMBL/GenBank/DDBJ databases">
        <title>Complete genome sequence of Vibrio vulnificus CMCP6.</title>
        <authorList>
            <person name="Rhee J.H."/>
            <person name="Kim S.Y."/>
            <person name="Chung S.S."/>
            <person name="Kim J.J."/>
            <person name="Moon Y.H."/>
            <person name="Jeong H."/>
            <person name="Choy H.E."/>
        </authorList>
    </citation>
    <scope>NUCLEOTIDE SEQUENCE [LARGE SCALE GENOMIC DNA]</scope>
    <source>
        <strain>CMCP6</strain>
    </source>
</reference>
<organism>
    <name type="scientific">Vibrio vulnificus (strain CMCP6)</name>
    <dbReference type="NCBI Taxonomy" id="216895"/>
    <lineage>
        <taxon>Bacteria</taxon>
        <taxon>Pseudomonadati</taxon>
        <taxon>Pseudomonadota</taxon>
        <taxon>Gammaproteobacteria</taxon>
        <taxon>Vibrionales</taxon>
        <taxon>Vibrionaceae</taxon>
        <taxon>Vibrio</taxon>
    </lineage>
</organism>
<accession>Q8D6H9</accession>
<evidence type="ECO:0000250" key="1"/>
<evidence type="ECO:0000255" key="2">
    <source>
        <dbReference type="HAMAP-Rule" id="MF_00492"/>
    </source>
</evidence>
<keyword id="KW-0963">Cytoplasm</keyword>
<keyword id="KW-0570">Pentose shunt</keyword>
<keyword id="KW-0704">Schiff base</keyword>
<keyword id="KW-0808">Transferase</keyword>
<dbReference type="EC" id="2.2.1.2" evidence="2"/>
<dbReference type="EMBL" id="AE016796">
    <property type="protein sequence ID" value="AAO07500.1"/>
    <property type="molecule type" value="Genomic_DNA"/>
</dbReference>
<dbReference type="RefSeq" id="WP_011081497.1">
    <property type="nucleotide sequence ID" value="NC_004460.2"/>
</dbReference>
<dbReference type="SMR" id="Q8D6H9"/>
<dbReference type="KEGG" id="vvu:VV2_0552"/>
<dbReference type="HOGENOM" id="CLU_047470_0_1_6"/>
<dbReference type="UniPathway" id="UPA00115">
    <property type="reaction ID" value="UER00414"/>
</dbReference>
<dbReference type="Proteomes" id="UP000002275">
    <property type="component" value="Chromosome 2"/>
</dbReference>
<dbReference type="GO" id="GO:0005829">
    <property type="term" value="C:cytosol"/>
    <property type="evidence" value="ECO:0007669"/>
    <property type="project" value="TreeGrafter"/>
</dbReference>
<dbReference type="GO" id="GO:0004801">
    <property type="term" value="F:transaldolase activity"/>
    <property type="evidence" value="ECO:0000250"/>
    <property type="project" value="UniProtKB"/>
</dbReference>
<dbReference type="GO" id="GO:0005975">
    <property type="term" value="P:carbohydrate metabolic process"/>
    <property type="evidence" value="ECO:0007669"/>
    <property type="project" value="InterPro"/>
</dbReference>
<dbReference type="GO" id="GO:0006098">
    <property type="term" value="P:pentose-phosphate shunt"/>
    <property type="evidence" value="ECO:0007669"/>
    <property type="project" value="UniProtKB-UniRule"/>
</dbReference>
<dbReference type="CDD" id="cd00957">
    <property type="entry name" value="Transaldolase_TalAB"/>
    <property type="match status" value="1"/>
</dbReference>
<dbReference type="FunFam" id="3.20.20.70:FF:000002">
    <property type="entry name" value="Transaldolase"/>
    <property type="match status" value="1"/>
</dbReference>
<dbReference type="Gene3D" id="3.20.20.70">
    <property type="entry name" value="Aldolase class I"/>
    <property type="match status" value="1"/>
</dbReference>
<dbReference type="HAMAP" id="MF_00492">
    <property type="entry name" value="Transaldolase_1"/>
    <property type="match status" value="1"/>
</dbReference>
<dbReference type="InterPro" id="IPR013785">
    <property type="entry name" value="Aldolase_TIM"/>
</dbReference>
<dbReference type="InterPro" id="IPR001585">
    <property type="entry name" value="TAL/FSA"/>
</dbReference>
<dbReference type="InterPro" id="IPR004730">
    <property type="entry name" value="Transaldolase_1"/>
</dbReference>
<dbReference type="InterPro" id="IPR018225">
    <property type="entry name" value="Transaldolase_AS"/>
</dbReference>
<dbReference type="NCBIfam" id="NF009001">
    <property type="entry name" value="PRK12346.1"/>
    <property type="match status" value="1"/>
</dbReference>
<dbReference type="NCBIfam" id="TIGR00874">
    <property type="entry name" value="talAB"/>
    <property type="match status" value="1"/>
</dbReference>
<dbReference type="PANTHER" id="PTHR10683">
    <property type="entry name" value="TRANSALDOLASE"/>
    <property type="match status" value="1"/>
</dbReference>
<dbReference type="PANTHER" id="PTHR10683:SF18">
    <property type="entry name" value="TRANSALDOLASE"/>
    <property type="match status" value="1"/>
</dbReference>
<dbReference type="Pfam" id="PF00923">
    <property type="entry name" value="TAL_FSA"/>
    <property type="match status" value="1"/>
</dbReference>
<dbReference type="SUPFAM" id="SSF51569">
    <property type="entry name" value="Aldolase"/>
    <property type="match status" value="1"/>
</dbReference>
<dbReference type="PROSITE" id="PS01054">
    <property type="entry name" value="TRANSALDOLASE_1"/>
    <property type="match status" value="1"/>
</dbReference>
<dbReference type="PROSITE" id="PS00958">
    <property type="entry name" value="TRANSALDOLASE_2"/>
    <property type="match status" value="1"/>
</dbReference>
<comment type="function">
    <text evidence="2">Transaldolase is important for the balance of metabolites in the pentose-phosphate pathway.</text>
</comment>
<comment type="catalytic activity">
    <reaction evidence="2">
        <text>D-sedoheptulose 7-phosphate + D-glyceraldehyde 3-phosphate = D-erythrose 4-phosphate + beta-D-fructose 6-phosphate</text>
        <dbReference type="Rhea" id="RHEA:17053"/>
        <dbReference type="ChEBI" id="CHEBI:16897"/>
        <dbReference type="ChEBI" id="CHEBI:57483"/>
        <dbReference type="ChEBI" id="CHEBI:57634"/>
        <dbReference type="ChEBI" id="CHEBI:59776"/>
        <dbReference type="EC" id="2.2.1.2"/>
    </reaction>
</comment>
<comment type="pathway">
    <text evidence="2">Carbohydrate degradation; pentose phosphate pathway; D-glyceraldehyde 3-phosphate and beta-D-fructose 6-phosphate from D-ribose 5-phosphate and D-xylulose 5-phosphate (non-oxidative stage): step 2/3.</text>
</comment>
<comment type="subunit">
    <text evidence="1">Homodimer.</text>
</comment>
<comment type="subcellular location">
    <subcellularLocation>
        <location evidence="2">Cytoplasm</location>
    </subcellularLocation>
</comment>
<comment type="similarity">
    <text evidence="2">Belongs to the transaldolase family. Type 1 subfamily.</text>
</comment>
<proteinExistence type="inferred from homology"/>
<sequence>MSNKLEQLRKLTTVVADTGEIDAIKKYQPEDATTNPSLILKAAQIAEYAPLIDASIEYAKTQSDDKAQQIQDTCDMLAVNIGKEILKTIPGRISTEVDARLSYDMEGSVAKARQLVKMYNDAGITNDRILIKLASTWEGIRAAEILEKEGINCNLTLLFSFAQARACAEAGVFLISPFVGRIMDWYKAKEGRDFEAQEDPGVLSVTKIYNYYKEYGYKTVVMGASFRNIGEILELAGCDRLTIAPALLAELEAAEGEVVEKLVDSKGAAERPAAMTHAEFLWEHNQDPMAVEKLAEGIRNFAVDQGKLEAMIAAKL</sequence>
<feature type="chain" id="PRO_0000173622" description="Transaldolase">
    <location>
        <begin position="1"/>
        <end position="316"/>
    </location>
</feature>
<feature type="active site" description="Schiff-base intermediate with substrate" evidence="2">
    <location>
        <position position="132"/>
    </location>
</feature>